<reference key="1">
    <citation type="journal article" date="2008" name="J. Bacteriol.">
        <title>Genome sequence of Thermofilum pendens reveals an exceptional loss of biosynthetic pathways without genome reduction.</title>
        <authorList>
            <person name="Anderson I."/>
            <person name="Rodriguez J."/>
            <person name="Susanti D."/>
            <person name="Porat I."/>
            <person name="Reich C."/>
            <person name="Ulrich L.E."/>
            <person name="Elkins J.G."/>
            <person name="Mavromatis K."/>
            <person name="Lykidis A."/>
            <person name="Kim E."/>
            <person name="Thompson L.S."/>
            <person name="Nolan M."/>
            <person name="Land M."/>
            <person name="Copeland A."/>
            <person name="Lapidus A."/>
            <person name="Lucas S."/>
            <person name="Detter C."/>
            <person name="Zhulin I.B."/>
            <person name="Olsen G.J."/>
            <person name="Whitman W."/>
            <person name="Mukhopadhyay B."/>
            <person name="Bristow J."/>
            <person name="Kyrpides N."/>
        </authorList>
    </citation>
    <scope>NUCLEOTIDE SEQUENCE [LARGE SCALE GENOMIC DNA]</scope>
    <source>
        <strain>DSM 2475 / Hrk 5</strain>
    </source>
</reference>
<keyword id="KW-0067">ATP-binding</keyword>
<keyword id="KW-0235">DNA replication</keyword>
<keyword id="KW-0547">Nucleotide-binding</keyword>
<keyword id="KW-1185">Reference proteome</keyword>
<sequence length="413" mass="46515">MSAVKVQLVPWTEKYRPARIADVVGNEEAKKKYVAWINSWVKGKPSKKAALLYGPPGSGKTSIVHATAKEFSWELIELNASDVRTREALQQRLLGALNTRSVLGYSGKIILLDEVDGISTKEDAGGLQAIVELIEKSNWPIVLTANDPWDPKLRPLRDLCELIEFKKIGKRDIMKVLENICSKEGVECSREVLSAIADNAKGDLRAAINDLQSLAMGKKTISLADLQILGDRAEQETIFDIVRSVLTAKYPEQALAVTRLPSLDYEMLMQWLSENIVYQYEPSLQAIADAYDALSWADIMLTRMKREQQWALLSYALELMTAGVASARERPPFKFVKYSFPEKLRILARSKEKREKFVRAVRGAAAKIHVSTSKFRTDVLPYLRVIYEHDKKRALEILRNLGVPEDALELATQ</sequence>
<name>RFCL_THEPD</name>
<proteinExistence type="inferred from homology"/>
<protein>
    <recommendedName>
        <fullName evidence="1">Replication factor C large subunit</fullName>
        <shortName evidence="1">RFC large subunit</shortName>
    </recommendedName>
    <alternativeName>
        <fullName evidence="1">Clamp loader large subunit</fullName>
    </alternativeName>
</protein>
<dbReference type="EMBL" id="CP000505">
    <property type="protein sequence ID" value="ABL77676.1"/>
    <property type="molecule type" value="Genomic_DNA"/>
</dbReference>
<dbReference type="RefSeq" id="WP_011751941.1">
    <property type="nucleotide sequence ID" value="NC_008698.1"/>
</dbReference>
<dbReference type="SMR" id="A1RWU6"/>
<dbReference type="STRING" id="368408.Tpen_0266"/>
<dbReference type="EnsemblBacteria" id="ABL77676">
    <property type="protein sequence ID" value="ABL77676"/>
    <property type="gene ID" value="Tpen_0266"/>
</dbReference>
<dbReference type="GeneID" id="4601684"/>
<dbReference type="KEGG" id="tpe:Tpen_0266"/>
<dbReference type="eggNOG" id="arCOG00470">
    <property type="taxonomic scope" value="Archaea"/>
</dbReference>
<dbReference type="HOGENOM" id="CLU_027255_1_1_2"/>
<dbReference type="OrthoDB" id="8658at2157"/>
<dbReference type="Proteomes" id="UP000000641">
    <property type="component" value="Chromosome"/>
</dbReference>
<dbReference type="GO" id="GO:0005524">
    <property type="term" value="F:ATP binding"/>
    <property type="evidence" value="ECO:0007669"/>
    <property type="project" value="UniProtKB-UniRule"/>
</dbReference>
<dbReference type="GO" id="GO:0016887">
    <property type="term" value="F:ATP hydrolysis activity"/>
    <property type="evidence" value="ECO:0007669"/>
    <property type="project" value="InterPro"/>
</dbReference>
<dbReference type="GO" id="GO:0003689">
    <property type="term" value="F:DNA clamp loader activity"/>
    <property type="evidence" value="ECO:0007669"/>
    <property type="project" value="UniProtKB-UniRule"/>
</dbReference>
<dbReference type="GO" id="GO:0006260">
    <property type="term" value="P:DNA replication"/>
    <property type="evidence" value="ECO:0007669"/>
    <property type="project" value="UniProtKB-UniRule"/>
</dbReference>
<dbReference type="CDD" id="cd00009">
    <property type="entry name" value="AAA"/>
    <property type="match status" value="1"/>
</dbReference>
<dbReference type="CDD" id="cd18140">
    <property type="entry name" value="HLD_clamp_RFC"/>
    <property type="match status" value="1"/>
</dbReference>
<dbReference type="Gene3D" id="1.10.8.60">
    <property type="match status" value="1"/>
</dbReference>
<dbReference type="Gene3D" id="3.40.50.300">
    <property type="entry name" value="P-loop containing nucleotide triphosphate hydrolases"/>
    <property type="match status" value="1"/>
</dbReference>
<dbReference type="HAMAP" id="MF_01508">
    <property type="entry name" value="RfcL"/>
    <property type="match status" value="1"/>
</dbReference>
<dbReference type="InterPro" id="IPR003593">
    <property type="entry name" value="AAA+_ATPase"/>
</dbReference>
<dbReference type="InterPro" id="IPR003959">
    <property type="entry name" value="ATPase_AAA_core"/>
</dbReference>
<dbReference type="InterPro" id="IPR027417">
    <property type="entry name" value="P-loop_NTPase"/>
</dbReference>
<dbReference type="InterPro" id="IPR023935">
    <property type="entry name" value="Rep_factor-C_lsu"/>
</dbReference>
<dbReference type="InterPro" id="IPR047854">
    <property type="entry name" value="RFC_lid"/>
</dbReference>
<dbReference type="NCBIfam" id="NF003229">
    <property type="entry name" value="PRK04195.1-5"/>
    <property type="match status" value="1"/>
</dbReference>
<dbReference type="PANTHER" id="PTHR23389">
    <property type="entry name" value="CHROMOSOME TRANSMISSION FIDELITY FACTOR 18"/>
    <property type="match status" value="1"/>
</dbReference>
<dbReference type="PANTHER" id="PTHR23389:SF6">
    <property type="entry name" value="REPLICATION FACTOR C SUBUNIT 1"/>
    <property type="match status" value="1"/>
</dbReference>
<dbReference type="Pfam" id="PF00004">
    <property type="entry name" value="AAA"/>
    <property type="match status" value="1"/>
</dbReference>
<dbReference type="Pfam" id="PF21960">
    <property type="entry name" value="RCF1-5-like_lid"/>
    <property type="match status" value="1"/>
</dbReference>
<dbReference type="SMART" id="SM00382">
    <property type="entry name" value="AAA"/>
    <property type="match status" value="1"/>
</dbReference>
<dbReference type="SUPFAM" id="SSF52540">
    <property type="entry name" value="P-loop containing nucleoside triphosphate hydrolases"/>
    <property type="match status" value="1"/>
</dbReference>
<gene>
    <name evidence="1" type="primary">rfcL</name>
    <name type="ordered locus">Tpen_0266</name>
</gene>
<organism>
    <name type="scientific">Thermofilum pendens (strain DSM 2475 / Hrk 5)</name>
    <dbReference type="NCBI Taxonomy" id="368408"/>
    <lineage>
        <taxon>Archaea</taxon>
        <taxon>Thermoproteota</taxon>
        <taxon>Thermoprotei</taxon>
        <taxon>Thermofilales</taxon>
        <taxon>Thermofilaceae</taxon>
        <taxon>Thermofilum</taxon>
    </lineage>
</organism>
<accession>A1RWU6</accession>
<comment type="function">
    <text evidence="1">Part of the RFC clamp loader complex which loads the PCNA sliding clamp onto DNA.</text>
</comment>
<comment type="subunit">
    <text evidence="1">Heteromultimer composed of small subunits (RfcS) and large subunits (RfcL).</text>
</comment>
<comment type="similarity">
    <text evidence="1">Belongs to the activator 1 small subunits family. RfcL subfamily.</text>
</comment>
<feature type="chain" id="PRO_0000292186" description="Replication factor C large subunit">
    <location>
        <begin position="1"/>
        <end position="413"/>
    </location>
</feature>
<feature type="binding site" evidence="1">
    <location>
        <begin position="54"/>
        <end position="61"/>
    </location>
    <ligand>
        <name>ATP</name>
        <dbReference type="ChEBI" id="CHEBI:30616"/>
    </ligand>
</feature>
<evidence type="ECO:0000255" key="1">
    <source>
        <dbReference type="HAMAP-Rule" id="MF_01508"/>
    </source>
</evidence>